<comment type="function">
    <text evidence="3">Inhibits trypsin (IC(50)=17.60 nM) and, to a lesser extent, alpha-chymotrypsin (IC(50)=2.38 uM).</text>
</comment>
<comment type="mass spectrometry" mass="7460.01" method="Electrospray" evidence="3"/>
<comment type="similarity">
    <text evidence="2">Belongs to the Bowman-Birk serine protease inhibitor family.</text>
</comment>
<name>IBB4_LATSA</name>
<protein>
    <recommendedName>
        <fullName>Bowman-Birk type proteinase inhibitor 4</fullName>
    </recommendedName>
    <alternativeName>
        <fullName evidence="4">LSI-4</fullName>
    </alternativeName>
</protein>
<evidence type="ECO:0000250" key="1">
    <source>
        <dbReference type="UniProtKB" id="P01055"/>
    </source>
</evidence>
<evidence type="ECO:0000255" key="2"/>
<evidence type="ECO:0000269" key="3">
    <source>
    </source>
</evidence>
<evidence type="ECO:0000303" key="4">
    <source>
    </source>
</evidence>
<evidence type="ECO:0000305" key="5"/>
<dbReference type="SMR" id="B3EWN8"/>
<dbReference type="GO" id="GO:0005576">
    <property type="term" value="C:extracellular region"/>
    <property type="evidence" value="ECO:0007669"/>
    <property type="project" value="InterPro"/>
</dbReference>
<dbReference type="GO" id="GO:0004867">
    <property type="term" value="F:serine-type endopeptidase inhibitor activity"/>
    <property type="evidence" value="ECO:0000314"/>
    <property type="project" value="UniProtKB"/>
</dbReference>
<dbReference type="GO" id="GO:0010951">
    <property type="term" value="P:negative regulation of endopeptidase activity"/>
    <property type="evidence" value="ECO:0000314"/>
    <property type="project" value="UniProtKB"/>
</dbReference>
<dbReference type="FunFam" id="2.10.69.10:FF:000002">
    <property type="match status" value="1"/>
</dbReference>
<dbReference type="Gene3D" id="2.10.69.10">
    <property type="entry name" value="Cysteine Protease (Bromelain) Inhibitor, subunit H"/>
    <property type="match status" value="1"/>
</dbReference>
<dbReference type="InterPro" id="IPR035995">
    <property type="entry name" value="Bowman-Birk_prot_inh"/>
</dbReference>
<dbReference type="InterPro" id="IPR000877">
    <property type="entry name" value="Prot_inh_BBI"/>
</dbReference>
<dbReference type="Pfam" id="PF00228">
    <property type="entry name" value="Bowman-Birk_leg"/>
    <property type="match status" value="1"/>
</dbReference>
<dbReference type="SUPFAM" id="SSF57247">
    <property type="entry name" value="Bowman-Birk inhibitor, BBI"/>
    <property type="match status" value="1"/>
</dbReference>
<proteinExistence type="evidence at protein level"/>
<reference evidence="5" key="1">
    <citation type="journal article" date="2011" name="Mol. Biosyst.">
        <title>A Bowman-Birk inhibitor with anti-elastase activity from Lathyrus sativus L. seeds.</title>
        <authorList>
            <person name="Rocco M."/>
            <person name="Malorni L."/>
            <person name="Chambery A."/>
            <person name="Poerio E."/>
            <person name="Parente A."/>
            <person name="Di Maro A."/>
        </authorList>
    </citation>
    <scope>PROTEIN SEQUENCE</scope>
    <scope>FUNCTION</scope>
    <scope>MASS SPECTROMETRY</scope>
    <source>
        <tissue evidence="3">Seed</tissue>
    </source>
</reference>
<sequence length="30" mass="3247">GDDVKSACCDTCLCTKSNPPICRCVDIRET</sequence>
<organism>
    <name type="scientific">Lathyrus sativus</name>
    <name type="common">White vetchling</name>
    <dbReference type="NCBI Taxonomy" id="3860"/>
    <lineage>
        <taxon>Eukaryota</taxon>
        <taxon>Viridiplantae</taxon>
        <taxon>Streptophyta</taxon>
        <taxon>Embryophyta</taxon>
        <taxon>Tracheophyta</taxon>
        <taxon>Spermatophyta</taxon>
        <taxon>Magnoliopsida</taxon>
        <taxon>eudicotyledons</taxon>
        <taxon>Gunneridae</taxon>
        <taxon>Pentapetalae</taxon>
        <taxon>rosids</taxon>
        <taxon>fabids</taxon>
        <taxon>Fabales</taxon>
        <taxon>Fabaceae</taxon>
        <taxon>Papilionoideae</taxon>
        <taxon>50 kb inversion clade</taxon>
        <taxon>NPAAA clade</taxon>
        <taxon>Hologalegina</taxon>
        <taxon>IRL clade</taxon>
        <taxon>Fabeae</taxon>
        <taxon>Lathyrus</taxon>
    </lineage>
</organism>
<keyword id="KW-0903">Direct protein sequencing</keyword>
<keyword id="KW-1015">Disulfide bond</keyword>
<keyword id="KW-0646">Protease inhibitor</keyword>
<keyword id="KW-0722">Serine protease inhibitor</keyword>
<accession>B3EWN8</accession>
<feature type="chain" id="PRO_0000419011" description="Bowman-Birk type proteinase inhibitor 4">
    <location>
        <begin position="1"/>
        <end position="30" status="greater than"/>
    </location>
</feature>
<feature type="site" description="Reactive bond for trypsin" evidence="1">
    <location>
        <begin position="16"/>
        <end position="17"/>
    </location>
</feature>
<feature type="disulfide bond" evidence="1">
    <location>
        <begin position="8"/>
        <end status="unknown"/>
    </location>
</feature>
<feature type="disulfide bond" evidence="1">
    <location>
        <begin position="9"/>
        <end position="24"/>
    </location>
</feature>
<feature type="disulfide bond" evidence="1">
    <location>
        <begin position="12"/>
        <end status="unknown"/>
    </location>
</feature>
<feature type="disulfide bond" evidence="1">
    <location>
        <begin position="14"/>
        <end position="22"/>
    </location>
</feature>
<feature type="non-terminal residue" evidence="4">
    <location>
        <position position="30"/>
    </location>
</feature>